<comment type="function">
    <text evidence="1">Catalyzes the first step of the methylation pathway of phosphatidylcholine biosynthesis, the SAM-dependent methylation of phosphatidylethanolamine (PE) to phosphatidylmonomethylethanolamine (PMME).</text>
</comment>
<comment type="catalytic activity">
    <reaction evidence="1">
        <text>a 1,2-diacyl-sn-glycero-3-phosphoethanolamine + S-adenosyl-L-methionine = a 1,2-diacyl-sn-glycero-3-phospho-N-methylethanolamine + S-adenosyl-L-homocysteine + H(+)</text>
        <dbReference type="Rhea" id="RHEA:11164"/>
        <dbReference type="ChEBI" id="CHEBI:15378"/>
        <dbReference type="ChEBI" id="CHEBI:57856"/>
        <dbReference type="ChEBI" id="CHEBI:59789"/>
        <dbReference type="ChEBI" id="CHEBI:64573"/>
        <dbReference type="ChEBI" id="CHEBI:64612"/>
        <dbReference type="EC" id="2.1.1.17"/>
    </reaction>
</comment>
<comment type="pathway">
    <text evidence="1">Phospholipid metabolism; phosphatidylcholine biosynthesis.</text>
</comment>
<comment type="subcellular location">
    <subcellularLocation>
        <location evidence="1">Endoplasmic reticulum membrane</location>
        <topology evidence="1">Multi-pass membrane protein</topology>
    </subcellularLocation>
</comment>
<comment type="similarity">
    <text evidence="1">Belongs to the class VI-like SAM-binding methyltransferase superfamily. CHO2 family.</text>
</comment>
<proteinExistence type="inferred from homology"/>
<organism>
    <name type="scientific">Talaromyces marneffei (strain ATCC 18224 / CBS 334.59 / QM 7333)</name>
    <name type="common">Penicillium marneffei</name>
    <dbReference type="NCBI Taxonomy" id="441960"/>
    <lineage>
        <taxon>Eukaryota</taxon>
        <taxon>Fungi</taxon>
        <taxon>Dikarya</taxon>
        <taxon>Ascomycota</taxon>
        <taxon>Pezizomycotina</taxon>
        <taxon>Eurotiomycetes</taxon>
        <taxon>Eurotiomycetidae</taxon>
        <taxon>Eurotiales</taxon>
        <taxon>Trichocomaceae</taxon>
        <taxon>Talaromyces</taxon>
        <taxon>Talaromyces sect. Talaromyces</taxon>
    </lineage>
</organism>
<feature type="chain" id="PRO_0000405905" description="Phosphatidylethanolamine N-methyltransferase">
    <location>
        <begin position="1"/>
        <end position="992"/>
    </location>
</feature>
<feature type="topological domain" description="Lumenal" evidence="1">
    <location>
        <begin position="1"/>
        <end position="84"/>
    </location>
</feature>
<feature type="transmembrane region" description="Helical" evidence="1">
    <location>
        <begin position="85"/>
        <end position="105"/>
    </location>
</feature>
<feature type="topological domain" description="Cytoplasmic" evidence="1">
    <location>
        <begin position="106"/>
        <end position="111"/>
    </location>
</feature>
<feature type="transmembrane region" description="Helical" evidence="1">
    <location>
        <begin position="112"/>
        <end position="132"/>
    </location>
</feature>
<feature type="topological domain" description="Lumenal" evidence="1">
    <location>
        <begin position="133"/>
        <end position="197"/>
    </location>
</feature>
<feature type="transmembrane region" description="Helical" evidence="1">
    <location>
        <begin position="198"/>
        <end position="218"/>
    </location>
</feature>
<feature type="topological domain" description="Cytoplasmic" evidence="1">
    <location>
        <begin position="219"/>
        <end position="225"/>
    </location>
</feature>
<feature type="transmembrane region" description="Helical" evidence="1">
    <location>
        <begin position="226"/>
        <end position="246"/>
    </location>
</feature>
<feature type="topological domain" description="Lumenal" evidence="1">
    <location>
        <begin position="247"/>
        <end position="279"/>
    </location>
</feature>
<feature type="transmembrane region" description="Helical" evidence="1">
    <location>
        <begin position="280"/>
        <end position="300"/>
    </location>
</feature>
<feature type="topological domain" description="Cytoplasmic" evidence="1">
    <location>
        <begin position="301"/>
        <end position="302"/>
    </location>
</feature>
<feature type="transmembrane region" description="Helical" evidence="1">
    <location>
        <begin position="303"/>
        <end position="323"/>
    </location>
</feature>
<feature type="topological domain" description="Lumenal" evidence="1">
    <location>
        <begin position="324"/>
        <end position="403"/>
    </location>
</feature>
<feature type="transmembrane region" description="Helical" evidence="1">
    <location>
        <begin position="404"/>
        <end position="424"/>
    </location>
</feature>
<feature type="topological domain" description="Cytoplasmic" evidence="1">
    <location>
        <begin position="425"/>
        <end position="426"/>
    </location>
</feature>
<feature type="transmembrane region" description="Helical" evidence="1">
    <location>
        <begin position="427"/>
        <end position="447"/>
    </location>
</feature>
<feature type="topological domain" description="Lumenal" evidence="1">
    <location>
        <begin position="448"/>
        <end position="477"/>
    </location>
</feature>
<feature type="transmembrane region" description="Helical" evidence="1">
    <location>
        <begin position="478"/>
        <end position="497"/>
    </location>
</feature>
<feature type="topological domain" description="Cytoplasmic" evidence="1">
    <location>
        <begin position="498"/>
        <end position="524"/>
    </location>
</feature>
<feature type="transmembrane region" description="Helical" evidence="1">
    <location>
        <begin position="525"/>
        <end position="545"/>
    </location>
</feature>
<feature type="topological domain" description="Lumenal" evidence="1">
    <location>
        <begin position="546"/>
        <end position="581"/>
    </location>
</feature>
<feature type="transmembrane region" description="Helical" evidence="1">
    <location>
        <begin position="582"/>
        <end position="602"/>
    </location>
</feature>
<feature type="topological domain" description="Cytoplasmic" evidence="1">
    <location>
        <begin position="603"/>
        <end position="992"/>
    </location>
</feature>
<feature type="region of interest" description="Disordered" evidence="2">
    <location>
        <begin position="1"/>
        <end position="27"/>
    </location>
</feature>
<feature type="region of interest" description="Disordered" evidence="2">
    <location>
        <begin position="41"/>
        <end position="60"/>
    </location>
</feature>
<feature type="region of interest" description="Disordered" evidence="2">
    <location>
        <begin position="708"/>
        <end position="733"/>
    </location>
</feature>
<feature type="compositionally biased region" description="Polar residues" evidence="2">
    <location>
        <begin position="1"/>
        <end position="10"/>
    </location>
</feature>
<feature type="compositionally biased region" description="Basic and acidic residues" evidence="2">
    <location>
        <begin position="11"/>
        <end position="21"/>
    </location>
</feature>
<feature type="compositionally biased region" description="Polar residues" evidence="2">
    <location>
        <begin position="709"/>
        <end position="719"/>
    </location>
</feature>
<name>CHO2_TALMQ</name>
<evidence type="ECO:0000255" key="1">
    <source>
        <dbReference type="HAMAP-Rule" id="MF_03217"/>
    </source>
</evidence>
<evidence type="ECO:0000256" key="2">
    <source>
        <dbReference type="SAM" id="MobiDB-lite"/>
    </source>
</evidence>
<accession>B6QG32</accession>
<sequence length="992" mass="112150">MDSASASGAQRQDEGLRERMRPSPPVDIDAVDQALATAGYGVTTDNRTSDDKKTFGRTPDGTIFTVPQTHDMVSQLLSPTEPKNVSDLLVLAILAVHILIFWALSPQSRIPVFAAIYMFWRTSYNGGIGWLLHNQSHHNTMVRWATKSKIFVNPSTGKNPRPILYRLLKKDMETMIPKDYSFDEAPLEYNTWLVFRRFVDVILMCDFTSYCLFAIACGSRPENETTLMTALRWAAGWVLVIFNLWVKLDAHRVVKDFAWYWGDFFFLIDQELTFDGVFEMAPHPMYSVGYAGYYGISLMAASYKVLFISIIAHAAQFAFLVLVENPHIDRVYNPPPPRKRSVQHDLKDLNGFNAQTSPISDSFAATPAPNGIDDKASMQQPPSSVHNLLGLHNLDLHRVTDSSVILIQLLVFALTVLTPSTPFYQYLFVANAAIWRCWYSIGIGYILHRQSKYKSWTRHFVKYGENTDEAWRQWKGSYHLSMTMCYASFVAATWKMYSMPSDWNHGLALLKHTLGFSLAALQIWTSVSIYDSLGEFGWFFGDFFFDAQSKLTYSGIYRFLNNPERVLGLAGLWGAALITSKGAIIFLALISHILTLAFIQLVERPHMQKLYGRSLRKDAGLVKNLKRSLPPPLQQLGGSVDRIMDESFEFVEELLDSARPKLATGVNTFMKDAKSLFRQYPARITISRLDDEVAAGYNLEDYSLEIEGTESSPSAQVERSSGKEGANARAPPERRGDLKSLIFEYGAPIRVKWTAPLNHSKKDWVGLYMVTDNTRREVTRISSQGRWIATNEGAYDSLTCEKGLVTSDIVISASRRRDGENRDLASGEMVFSGDKLFWTQGVFEFRYHHNGKHNVMAISRPFEIRIGRFDEEDVVDMDNTTANSDGLIQAAIEEALLPVVRNCFDRNPEIAPETYDEHFGSLVDRDGKYAKRVVFAVHQMFGVELAPEVVRADGNVRNMAWRICNAKKVLAPYSMSRSRGTTTPTTQEKELS</sequence>
<reference key="1">
    <citation type="journal article" date="2015" name="Genome Announc.">
        <title>Genome sequence of the AIDS-associated pathogen Penicillium marneffei (ATCC18224) and its near taxonomic relative Talaromyces stipitatus (ATCC10500).</title>
        <authorList>
            <person name="Nierman W.C."/>
            <person name="Fedorova-Abrams N.D."/>
            <person name="Andrianopoulos A."/>
        </authorList>
    </citation>
    <scope>NUCLEOTIDE SEQUENCE [LARGE SCALE GENOMIC DNA]</scope>
    <source>
        <strain>ATCC 18224 / CBS 334.59 / QM 7333</strain>
    </source>
</reference>
<dbReference type="EC" id="2.1.1.17" evidence="1"/>
<dbReference type="EMBL" id="DS995901">
    <property type="protein sequence ID" value="EEA24417.1"/>
    <property type="molecule type" value="Genomic_DNA"/>
</dbReference>
<dbReference type="RefSeq" id="XP_002147928.1">
    <property type="nucleotide sequence ID" value="XM_002147892.1"/>
</dbReference>
<dbReference type="SMR" id="B6QG32"/>
<dbReference type="STRING" id="441960.B6QG32"/>
<dbReference type="VEuPathDB" id="FungiDB:PMAA_084230"/>
<dbReference type="HOGENOM" id="CLU_005987_0_0_1"/>
<dbReference type="OrthoDB" id="2257at28568"/>
<dbReference type="PhylomeDB" id="B6QG32"/>
<dbReference type="UniPathway" id="UPA00753"/>
<dbReference type="Proteomes" id="UP000001294">
    <property type="component" value="Unassembled WGS sequence"/>
</dbReference>
<dbReference type="GO" id="GO:0005789">
    <property type="term" value="C:endoplasmic reticulum membrane"/>
    <property type="evidence" value="ECO:0007669"/>
    <property type="project" value="UniProtKB-SubCell"/>
</dbReference>
<dbReference type="GO" id="GO:0004608">
    <property type="term" value="F:phosphatidylethanolamine N-methyltransferase activity"/>
    <property type="evidence" value="ECO:0007669"/>
    <property type="project" value="UniProtKB-UniRule"/>
</dbReference>
<dbReference type="GO" id="GO:0032259">
    <property type="term" value="P:methylation"/>
    <property type="evidence" value="ECO:0007669"/>
    <property type="project" value="UniProtKB-KW"/>
</dbReference>
<dbReference type="GO" id="GO:0006656">
    <property type="term" value="P:phosphatidylcholine biosynthetic process"/>
    <property type="evidence" value="ECO:0007669"/>
    <property type="project" value="UniProtKB-UniRule"/>
</dbReference>
<dbReference type="FunFam" id="2.60.40.2840:FF:000006">
    <property type="entry name" value="Phosphatidylethanolamine N-methyltransferase"/>
    <property type="match status" value="1"/>
</dbReference>
<dbReference type="Gene3D" id="2.60.40.2840">
    <property type="match status" value="1"/>
</dbReference>
<dbReference type="HAMAP" id="MF_03217">
    <property type="entry name" value="PEMT"/>
    <property type="match status" value="1"/>
</dbReference>
<dbReference type="InterPro" id="IPR007318">
    <property type="entry name" value="Phopholipid_MeTrfase"/>
</dbReference>
<dbReference type="InterPro" id="IPR016219">
    <property type="entry name" value="Phosphatid-EA_MeTrfase_fun"/>
</dbReference>
<dbReference type="PANTHER" id="PTHR32138">
    <property type="entry name" value="PHOSPHATIDYLETHANOLAMINE N-METHYLTRANSFERASE"/>
    <property type="match status" value="1"/>
</dbReference>
<dbReference type="PANTHER" id="PTHR32138:SF0">
    <property type="entry name" value="PHOSPHATIDYLETHANOLAMINE N-METHYLTRANSFERASE"/>
    <property type="match status" value="1"/>
</dbReference>
<dbReference type="Pfam" id="PF04191">
    <property type="entry name" value="PEMT"/>
    <property type="match status" value="2"/>
</dbReference>
<dbReference type="PIRSF" id="PIRSF000383">
    <property type="entry name" value="PEAMT"/>
    <property type="match status" value="1"/>
</dbReference>
<dbReference type="PROSITE" id="PS51598">
    <property type="entry name" value="SAM_CHO2"/>
    <property type="match status" value="1"/>
</dbReference>
<gene>
    <name type="primary">cho2</name>
    <name type="ORF">PMAA_084230</name>
</gene>
<protein>
    <recommendedName>
        <fullName evidence="1">Phosphatidylethanolamine N-methyltransferase</fullName>
        <shortName evidence="1">PE methyltransferase</shortName>
        <shortName evidence="1">PEAMT</shortName>
        <shortName evidence="1">PEMT</shortName>
        <ecNumber evidence="1">2.1.1.17</ecNumber>
    </recommendedName>
</protein>
<keyword id="KW-0256">Endoplasmic reticulum</keyword>
<keyword id="KW-0444">Lipid biosynthesis</keyword>
<keyword id="KW-0443">Lipid metabolism</keyword>
<keyword id="KW-0472">Membrane</keyword>
<keyword id="KW-0489">Methyltransferase</keyword>
<keyword id="KW-0594">Phospholipid biosynthesis</keyword>
<keyword id="KW-1208">Phospholipid metabolism</keyword>
<keyword id="KW-1185">Reference proteome</keyword>
<keyword id="KW-0949">S-adenosyl-L-methionine</keyword>
<keyword id="KW-0808">Transferase</keyword>
<keyword id="KW-0812">Transmembrane</keyword>
<keyword id="KW-1133">Transmembrane helix</keyword>